<name>RL19_SALSV</name>
<accession>B4TS53</accession>
<proteinExistence type="inferred from homology"/>
<keyword id="KW-0687">Ribonucleoprotein</keyword>
<keyword id="KW-0689">Ribosomal protein</keyword>
<feature type="chain" id="PRO_1000193883" description="Large ribosomal subunit protein bL19">
    <location>
        <begin position="1"/>
        <end position="115"/>
    </location>
</feature>
<dbReference type="EMBL" id="CP001127">
    <property type="protein sequence ID" value="ACF88946.1"/>
    <property type="molecule type" value="Genomic_DNA"/>
</dbReference>
<dbReference type="RefSeq" id="WP_000065257.1">
    <property type="nucleotide sequence ID" value="NC_011094.1"/>
</dbReference>
<dbReference type="SMR" id="B4TS53"/>
<dbReference type="KEGG" id="sew:SeSA_A2868"/>
<dbReference type="HOGENOM" id="CLU_103507_2_1_6"/>
<dbReference type="Proteomes" id="UP000001865">
    <property type="component" value="Chromosome"/>
</dbReference>
<dbReference type="GO" id="GO:0022625">
    <property type="term" value="C:cytosolic large ribosomal subunit"/>
    <property type="evidence" value="ECO:0007669"/>
    <property type="project" value="TreeGrafter"/>
</dbReference>
<dbReference type="GO" id="GO:0003735">
    <property type="term" value="F:structural constituent of ribosome"/>
    <property type="evidence" value="ECO:0007669"/>
    <property type="project" value="InterPro"/>
</dbReference>
<dbReference type="GO" id="GO:0006412">
    <property type="term" value="P:translation"/>
    <property type="evidence" value="ECO:0007669"/>
    <property type="project" value="UniProtKB-UniRule"/>
</dbReference>
<dbReference type="FunFam" id="2.30.30.790:FF:000001">
    <property type="entry name" value="50S ribosomal protein L19"/>
    <property type="match status" value="1"/>
</dbReference>
<dbReference type="Gene3D" id="2.30.30.790">
    <property type="match status" value="1"/>
</dbReference>
<dbReference type="HAMAP" id="MF_00402">
    <property type="entry name" value="Ribosomal_bL19"/>
    <property type="match status" value="1"/>
</dbReference>
<dbReference type="InterPro" id="IPR001857">
    <property type="entry name" value="Ribosomal_bL19"/>
</dbReference>
<dbReference type="InterPro" id="IPR018257">
    <property type="entry name" value="Ribosomal_bL19_CS"/>
</dbReference>
<dbReference type="InterPro" id="IPR038657">
    <property type="entry name" value="Ribosomal_bL19_sf"/>
</dbReference>
<dbReference type="InterPro" id="IPR008991">
    <property type="entry name" value="Translation_prot_SH3-like_sf"/>
</dbReference>
<dbReference type="NCBIfam" id="TIGR01024">
    <property type="entry name" value="rplS_bact"/>
    <property type="match status" value="1"/>
</dbReference>
<dbReference type="PANTHER" id="PTHR15680:SF9">
    <property type="entry name" value="LARGE RIBOSOMAL SUBUNIT PROTEIN BL19M"/>
    <property type="match status" value="1"/>
</dbReference>
<dbReference type="PANTHER" id="PTHR15680">
    <property type="entry name" value="RIBOSOMAL PROTEIN L19"/>
    <property type="match status" value="1"/>
</dbReference>
<dbReference type="Pfam" id="PF01245">
    <property type="entry name" value="Ribosomal_L19"/>
    <property type="match status" value="1"/>
</dbReference>
<dbReference type="PIRSF" id="PIRSF002191">
    <property type="entry name" value="Ribosomal_L19"/>
    <property type="match status" value="1"/>
</dbReference>
<dbReference type="PRINTS" id="PR00061">
    <property type="entry name" value="RIBOSOMALL19"/>
</dbReference>
<dbReference type="SUPFAM" id="SSF50104">
    <property type="entry name" value="Translation proteins SH3-like domain"/>
    <property type="match status" value="1"/>
</dbReference>
<dbReference type="PROSITE" id="PS01015">
    <property type="entry name" value="RIBOSOMAL_L19"/>
    <property type="match status" value="1"/>
</dbReference>
<organism>
    <name type="scientific">Salmonella schwarzengrund (strain CVM19633)</name>
    <dbReference type="NCBI Taxonomy" id="439843"/>
    <lineage>
        <taxon>Bacteria</taxon>
        <taxon>Pseudomonadati</taxon>
        <taxon>Pseudomonadota</taxon>
        <taxon>Gammaproteobacteria</taxon>
        <taxon>Enterobacterales</taxon>
        <taxon>Enterobacteriaceae</taxon>
        <taxon>Salmonella</taxon>
    </lineage>
</organism>
<reference key="1">
    <citation type="journal article" date="2011" name="J. Bacteriol.">
        <title>Comparative genomics of 28 Salmonella enterica isolates: evidence for CRISPR-mediated adaptive sublineage evolution.</title>
        <authorList>
            <person name="Fricke W.F."/>
            <person name="Mammel M.K."/>
            <person name="McDermott P.F."/>
            <person name="Tartera C."/>
            <person name="White D.G."/>
            <person name="Leclerc J.E."/>
            <person name="Ravel J."/>
            <person name="Cebula T.A."/>
        </authorList>
    </citation>
    <scope>NUCLEOTIDE SEQUENCE [LARGE SCALE GENOMIC DNA]</scope>
    <source>
        <strain>CVM19633</strain>
    </source>
</reference>
<evidence type="ECO:0000255" key="1">
    <source>
        <dbReference type="HAMAP-Rule" id="MF_00402"/>
    </source>
</evidence>
<evidence type="ECO:0000305" key="2"/>
<protein>
    <recommendedName>
        <fullName evidence="1">Large ribosomal subunit protein bL19</fullName>
    </recommendedName>
    <alternativeName>
        <fullName evidence="2">50S ribosomal protein L19</fullName>
    </alternativeName>
</protein>
<sequence>MSNIIKQLEQEQMKQNVPSFRPGDTVEVKVWVVEGTKKRLQAFEGVVIAIRNRGLHSAFTVRKISNGEGVERVFQTHSPVVDSIAVKRRGAVRKAKLYYLRERTGKAARIKERLN</sequence>
<comment type="function">
    <text evidence="1">This protein is located at the 30S-50S ribosomal subunit interface and may play a role in the structure and function of the aminoacyl-tRNA binding site.</text>
</comment>
<comment type="similarity">
    <text evidence="1">Belongs to the bacterial ribosomal protein bL19 family.</text>
</comment>
<gene>
    <name evidence="1" type="primary">rplS</name>
    <name type="ordered locus">SeSA_A2868</name>
</gene>